<protein>
    <recommendedName>
        <fullName evidence="1">Acetate kinase</fullName>
        <ecNumber evidence="1">2.7.2.1</ecNumber>
    </recommendedName>
    <alternativeName>
        <fullName evidence="1">Acetokinase</fullName>
    </alternativeName>
</protein>
<proteinExistence type="inferred from homology"/>
<sequence length="404" mass="43678">MDSILVVNAGSSSVKFQVFSAEGEGKLLRQIKGQVDGIGSRPRLRASGADNEPLADRAYPIESVSDVPAAMGVAGGWLRDELRISPMAVGHRVVHGGPDYDRPVLIDHGVVARLERFVALAPLHQPNNLDPIRSLLANFPALPQVACFDTAFHRTHDAVADYYAIPYQFYVEGVRRYGFHGLSYEYVAKTLPHVAPEIAKGRVIVAHLGSGASMCALKGGRSIESTMGFTALDGLPMGTRPGQIDPGVVLYLVSEKGMSPAKAQDFLYRDCGLKGLSGVSNDMRELEASEDPKAKLAVDYFVYRVGLNAGMLAAALQGLDAFVFTAGIGENSMRIRARIADQLAWLGVTLDPTQNSRHARLISGSDSRIPVYVIPTDEELMIAQHTLSLLLDRSSSSVRHERVS</sequence>
<keyword id="KW-0067">ATP-binding</keyword>
<keyword id="KW-0963">Cytoplasm</keyword>
<keyword id="KW-0418">Kinase</keyword>
<keyword id="KW-0460">Magnesium</keyword>
<keyword id="KW-0479">Metal-binding</keyword>
<keyword id="KW-0547">Nucleotide-binding</keyword>
<keyword id="KW-1185">Reference proteome</keyword>
<keyword id="KW-0808">Transferase</keyword>
<comment type="function">
    <text evidence="1">Catalyzes the formation of acetyl phosphate from acetate and ATP. Can also catalyze the reverse reaction.</text>
</comment>
<comment type="catalytic activity">
    <reaction evidence="1">
        <text>acetate + ATP = acetyl phosphate + ADP</text>
        <dbReference type="Rhea" id="RHEA:11352"/>
        <dbReference type="ChEBI" id="CHEBI:22191"/>
        <dbReference type="ChEBI" id="CHEBI:30089"/>
        <dbReference type="ChEBI" id="CHEBI:30616"/>
        <dbReference type="ChEBI" id="CHEBI:456216"/>
        <dbReference type="EC" id="2.7.2.1"/>
    </reaction>
</comment>
<comment type="cofactor">
    <cofactor evidence="1">
        <name>Mg(2+)</name>
        <dbReference type="ChEBI" id="CHEBI:18420"/>
    </cofactor>
    <cofactor evidence="1">
        <name>Mn(2+)</name>
        <dbReference type="ChEBI" id="CHEBI:29035"/>
    </cofactor>
    <text evidence="1">Mg(2+). Can also accept Mn(2+).</text>
</comment>
<comment type="pathway">
    <text evidence="1">Metabolic intermediate biosynthesis; acetyl-CoA biosynthesis; acetyl-CoA from acetate: step 1/2.</text>
</comment>
<comment type="subunit">
    <text evidence="1">Homodimer.</text>
</comment>
<comment type="subcellular location">
    <subcellularLocation>
        <location evidence="1">Cytoplasm</location>
    </subcellularLocation>
</comment>
<comment type="similarity">
    <text evidence="1">Belongs to the acetokinase family.</text>
</comment>
<evidence type="ECO:0000255" key="1">
    <source>
        <dbReference type="HAMAP-Rule" id="MF_00020"/>
    </source>
</evidence>
<accession>Q1QPW6</accession>
<gene>
    <name evidence="1" type="primary">ackA</name>
    <name type="ordered locus">Nham_0865</name>
</gene>
<feature type="chain" id="PRO_1000089986" description="Acetate kinase">
    <location>
        <begin position="1"/>
        <end position="404"/>
    </location>
</feature>
<feature type="active site" description="Proton donor/acceptor" evidence="1">
    <location>
        <position position="149"/>
    </location>
</feature>
<feature type="binding site" evidence="1">
    <location>
        <position position="8"/>
    </location>
    <ligand>
        <name>Mg(2+)</name>
        <dbReference type="ChEBI" id="CHEBI:18420"/>
    </ligand>
</feature>
<feature type="binding site" evidence="1">
    <location>
        <position position="15"/>
    </location>
    <ligand>
        <name>ATP</name>
        <dbReference type="ChEBI" id="CHEBI:30616"/>
    </ligand>
</feature>
<feature type="binding site" evidence="1">
    <location>
        <position position="92"/>
    </location>
    <ligand>
        <name>substrate</name>
    </ligand>
</feature>
<feature type="binding site" evidence="1">
    <location>
        <begin position="207"/>
        <end position="211"/>
    </location>
    <ligand>
        <name>ATP</name>
        <dbReference type="ChEBI" id="CHEBI:30616"/>
    </ligand>
</feature>
<feature type="binding site" evidence="1">
    <location>
        <begin position="282"/>
        <end position="284"/>
    </location>
    <ligand>
        <name>ATP</name>
        <dbReference type="ChEBI" id="CHEBI:30616"/>
    </ligand>
</feature>
<feature type="binding site" evidence="1">
    <location>
        <begin position="327"/>
        <end position="331"/>
    </location>
    <ligand>
        <name>ATP</name>
        <dbReference type="ChEBI" id="CHEBI:30616"/>
    </ligand>
</feature>
<feature type="binding site" evidence="1">
    <location>
        <position position="378"/>
    </location>
    <ligand>
        <name>Mg(2+)</name>
        <dbReference type="ChEBI" id="CHEBI:18420"/>
    </ligand>
</feature>
<feature type="site" description="Transition state stabilizer" evidence="1">
    <location>
        <position position="180"/>
    </location>
</feature>
<feature type="site" description="Transition state stabilizer" evidence="1">
    <location>
        <position position="240"/>
    </location>
</feature>
<organism>
    <name type="scientific">Nitrobacter hamburgensis (strain DSM 10229 / NCIMB 13809 / X14)</name>
    <dbReference type="NCBI Taxonomy" id="323097"/>
    <lineage>
        <taxon>Bacteria</taxon>
        <taxon>Pseudomonadati</taxon>
        <taxon>Pseudomonadota</taxon>
        <taxon>Alphaproteobacteria</taxon>
        <taxon>Hyphomicrobiales</taxon>
        <taxon>Nitrobacteraceae</taxon>
        <taxon>Nitrobacter</taxon>
    </lineage>
</organism>
<reference key="1">
    <citation type="submission" date="2006-03" db="EMBL/GenBank/DDBJ databases">
        <title>Complete sequence of chromosome of Nitrobacter hamburgensis X14.</title>
        <authorList>
            <consortium name="US DOE Joint Genome Institute"/>
            <person name="Copeland A."/>
            <person name="Lucas S."/>
            <person name="Lapidus A."/>
            <person name="Barry K."/>
            <person name="Detter J.C."/>
            <person name="Glavina del Rio T."/>
            <person name="Hammon N."/>
            <person name="Israni S."/>
            <person name="Dalin E."/>
            <person name="Tice H."/>
            <person name="Pitluck S."/>
            <person name="Chain P."/>
            <person name="Malfatti S."/>
            <person name="Shin M."/>
            <person name="Vergez L."/>
            <person name="Schmutz J."/>
            <person name="Larimer F."/>
            <person name="Land M."/>
            <person name="Hauser L."/>
            <person name="Kyrpides N."/>
            <person name="Ivanova N."/>
            <person name="Ward B."/>
            <person name="Arp D."/>
            <person name="Klotz M."/>
            <person name="Stein L."/>
            <person name="O'Mullan G."/>
            <person name="Starkenburg S."/>
            <person name="Sayavedra L."/>
            <person name="Poret-Peterson A.T."/>
            <person name="Gentry M.E."/>
            <person name="Bruce D."/>
            <person name="Richardson P."/>
        </authorList>
    </citation>
    <scope>NUCLEOTIDE SEQUENCE [LARGE SCALE GENOMIC DNA]</scope>
    <source>
        <strain>DSM 10229 / NCIMB 13809 / X14</strain>
    </source>
</reference>
<dbReference type="EC" id="2.7.2.1" evidence="1"/>
<dbReference type="EMBL" id="CP000319">
    <property type="protein sequence ID" value="ABE61731.1"/>
    <property type="molecule type" value="Genomic_DNA"/>
</dbReference>
<dbReference type="RefSeq" id="WP_011509431.1">
    <property type="nucleotide sequence ID" value="NC_007964.1"/>
</dbReference>
<dbReference type="SMR" id="Q1QPW6"/>
<dbReference type="STRING" id="323097.Nham_0865"/>
<dbReference type="KEGG" id="nha:Nham_0865"/>
<dbReference type="eggNOG" id="COG0282">
    <property type="taxonomic scope" value="Bacteria"/>
</dbReference>
<dbReference type="HOGENOM" id="CLU_020352_0_0_5"/>
<dbReference type="OrthoDB" id="9802453at2"/>
<dbReference type="UniPathway" id="UPA00340">
    <property type="reaction ID" value="UER00458"/>
</dbReference>
<dbReference type="Proteomes" id="UP000001953">
    <property type="component" value="Chromosome"/>
</dbReference>
<dbReference type="GO" id="GO:0005829">
    <property type="term" value="C:cytosol"/>
    <property type="evidence" value="ECO:0007669"/>
    <property type="project" value="TreeGrafter"/>
</dbReference>
<dbReference type="GO" id="GO:0008776">
    <property type="term" value="F:acetate kinase activity"/>
    <property type="evidence" value="ECO:0007669"/>
    <property type="project" value="UniProtKB-UniRule"/>
</dbReference>
<dbReference type="GO" id="GO:0005524">
    <property type="term" value="F:ATP binding"/>
    <property type="evidence" value="ECO:0007669"/>
    <property type="project" value="UniProtKB-KW"/>
</dbReference>
<dbReference type="GO" id="GO:0000287">
    <property type="term" value="F:magnesium ion binding"/>
    <property type="evidence" value="ECO:0007669"/>
    <property type="project" value="UniProtKB-UniRule"/>
</dbReference>
<dbReference type="GO" id="GO:0006083">
    <property type="term" value="P:acetate metabolic process"/>
    <property type="evidence" value="ECO:0007669"/>
    <property type="project" value="TreeGrafter"/>
</dbReference>
<dbReference type="GO" id="GO:0006085">
    <property type="term" value="P:acetyl-CoA biosynthetic process"/>
    <property type="evidence" value="ECO:0007669"/>
    <property type="project" value="UniProtKB-UniRule"/>
</dbReference>
<dbReference type="Gene3D" id="3.30.420.40">
    <property type="match status" value="2"/>
</dbReference>
<dbReference type="HAMAP" id="MF_00020">
    <property type="entry name" value="Acetate_kinase"/>
    <property type="match status" value="1"/>
</dbReference>
<dbReference type="InterPro" id="IPR004372">
    <property type="entry name" value="Ac/propionate_kinase"/>
</dbReference>
<dbReference type="InterPro" id="IPR000890">
    <property type="entry name" value="Aliphatic_acid_kin_short-chain"/>
</dbReference>
<dbReference type="InterPro" id="IPR023865">
    <property type="entry name" value="Aliphatic_acid_kinase_CS"/>
</dbReference>
<dbReference type="InterPro" id="IPR043129">
    <property type="entry name" value="ATPase_NBD"/>
</dbReference>
<dbReference type="NCBIfam" id="TIGR00016">
    <property type="entry name" value="ackA"/>
    <property type="match status" value="1"/>
</dbReference>
<dbReference type="PANTHER" id="PTHR21060">
    <property type="entry name" value="ACETATE KINASE"/>
    <property type="match status" value="1"/>
</dbReference>
<dbReference type="PANTHER" id="PTHR21060:SF21">
    <property type="entry name" value="ACETATE KINASE"/>
    <property type="match status" value="1"/>
</dbReference>
<dbReference type="Pfam" id="PF00871">
    <property type="entry name" value="Acetate_kinase"/>
    <property type="match status" value="1"/>
</dbReference>
<dbReference type="PIRSF" id="PIRSF000722">
    <property type="entry name" value="Acetate_prop_kin"/>
    <property type="match status" value="1"/>
</dbReference>
<dbReference type="PRINTS" id="PR00471">
    <property type="entry name" value="ACETATEKNASE"/>
</dbReference>
<dbReference type="SUPFAM" id="SSF53067">
    <property type="entry name" value="Actin-like ATPase domain"/>
    <property type="match status" value="2"/>
</dbReference>
<dbReference type="PROSITE" id="PS01075">
    <property type="entry name" value="ACETATE_KINASE_1"/>
    <property type="match status" value="1"/>
</dbReference>
<dbReference type="PROSITE" id="PS01076">
    <property type="entry name" value="ACETATE_KINASE_2"/>
    <property type="match status" value="1"/>
</dbReference>
<name>ACKA_NITHX</name>